<gene>
    <name evidence="1" type="primary">rplS</name>
    <name type="ordered locus">SPG_1187</name>
</gene>
<keyword id="KW-0687">Ribonucleoprotein</keyword>
<keyword id="KW-0689">Ribosomal protein</keyword>
<sequence length="115" mass="13136">MNPLIQSLTEGQLRTDIPSFRPGDTVRVHAKVVEGNRERIQIFEGVVIARKGAGISENYTVRKISNGVGVERIFPIHTPRVEKIEVVRYGKVRRAKLYYLRALQGKAARIKEIRR</sequence>
<accession>B5E529</accession>
<dbReference type="EMBL" id="CP001015">
    <property type="protein sequence ID" value="ACF55928.1"/>
    <property type="molecule type" value="Genomic_DNA"/>
</dbReference>
<dbReference type="SMR" id="B5E529"/>
<dbReference type="KEGG" id="spx:SPG_1187"/>
<dbReference type="HOGENOM" id="CLU_103507_2_1_9"/>
<dbReference type="GO" id="GO:0022625">
    <property type="term" value="C:cytosolic large ribosomal subunit"/>
    <property type="evidence" value="ECO:0007669"/>
    <property type="project" value="TreeGrafter"/>
</dbReference>
<dbReference type="GO" id="GO:0003735">
    <property type="term" value="F:structural constituent of ribosome"/>
    <property type="evidence" value="ECO:0007669"/>
    <property type="project" value="InterPro"/>
</dbReference>
<dbReference type="GO" id="GO:0006412">
    <property type="term" value="P:translation"/>
    <property type="evidence" value="ECO:0007669"/>
    <property type="project" value="UniProtKB-UniRule"/>
</dbReference>
<dbReference type="FunFam" id="2.30.30.790:FF:000001">
    <property type="entry name" value="50S ribosomal protein L19"/>
    <property type="match status" value="1"/>
</dbReference>
<dbReference type="Gene3D" id="2.30.30.790">
    <property type="match status" value="1"/>
</dbReference>
<dbReference type="HAMAP" id="MF_00402">
    <property type="entry name" value="Ribosomal_bL19"/>
    <property type="match status" value="1"/>
</dbReference>
<dbReference type="InterPro" id="IPR001857">
    <property type="entry name" value="Ribosomal_bL19"/>
</dbReference>
<dbReference type="InterPro" id="IPR018257">
    <property type="entry name" value="Ribosomal_bL19_CS"/>
</dbReference>
<dbReference type="InterPro" id="IPR038657">
    <property type="entry name" value="Ribosomal_bL19_sf"/>
</dbReference>
<dbReference type="InterPro" id="IPR008991">
    <property type="entry name" value="Translation_prot_SH3-like_sf"/>
</dbReference>
<dbReference type="NCBIfam" id="TIGR01024">
    <property type="entry name" value="rplS_bact"/>
    <property type="match status" value="1"/>
</dbReference>
<dbReference type="PANTHER" id="PTHR15680:SF9">
    <property type="entry name" value="LARGE RIBOSOMAL SUBUNIT PROTEIN BL19M"/>
    <property type="match status" value="1"/>
</dbReference>
<dbReference type="PANTHER" id="PTHR15680">
    <property type="entry name" value="RIBOSOMAL PROTEIN L19"/>
    <property type="match status" value="1"/>
</dbReference>
<dbReference type="Pfam" id="PF01245">
    <property type="entry name" value="Ribosomal_L19"/>
    <property type="match status" value="1"/>
</dbReference>
<dbReference type="PIRSF" id="PIRSF002191">
    <property type="entry name" value="Ribosomal_L19"/>
    <property type="match status" value="1"/>
</dbReference>
<dbReference type="PRINTS" id="PR00061">
    <property type="entry name" value="RIBOSOMALL19"/>
</dbReference>
<dbReference type="SUPFAM" id="SSF50104">
    <property type="entry name" value="Translation proteins SH3-like domain"/>
    <property type="match status" value="1"/>
</dbReference>
<dbReference type="PROSITE" id="PS01015">
    <property type="entry name" value="RIBOSOMAL_L19"/>
    <property type="match status" value="1"/>
</dbReference>
<name>RL19_STRP4</name>
<reference key="1">
    <citation type="journal article" date="2001" name="Microb. Drug Resist.">
        <title>Annotated draft genomic sequence from a Streptococcus pneumoniae type 19F clinical isolate.</title>
        <authorList>
            <person name="Dopazo J."/>
            <person name="Mendoza A."/>
            <person name="Herrero J."/>
            <person name="Caldara F."/>
            <person name="Humbert Y."/>
            <person name="Friedli L."/>
            <person name="Guerrier M."/>
            <person name="Grand-Schenk E."/>
            <person name="Gandin C."/>
            <person name="de Francesco M."/>
            <person name="Polissi A."/>
            <person name="Buell G."/>
            <person name="Feger G."/>
            <person name="Garcia E."/>
            <person name="Peitsch M."/>
            <person name="Garcia-Bustos J.F."/>
        </authorList>
    </citation>
    <scope>NUCLEOTIDE SEQUENCE [LARGE SCALE GENOMIC DNA]</scope>
    <source>
        <strain>G54</strain>
    </source>
</reference>
<reference key="2">
    <citation type="submission" date="2008-03" db="EMBL/GenBank/DDBJ databases">
        <title>Pneumococcal beta glucoside metabolism investigated by whole genome comparison.</title>
        <authorList>
            <person name="Mulas L."/>
            <person name="Trappetti C."/>
            <person name="Hakenbeck R."/>
            <person name="Iannelli F."/>
            <person name="Pozzi G."/>
            <person name="Davidsen T.M."/>
            <person name="Tettelin H."/>
            <person name="Oggioni M."/>
        </authorList>
    </citation>
    <scope>NUCLEOTIDE SEQUENCE [LARGE SCALE GENOMIC DNA]</scope>
    <source>
        <strain>G54</strain>
    </source>
</reference>
<feature type="chain" id="PRO_1000193900" description="Large ribosomal subunit protein bL19">
    <location>
        <begin position="1"/>
        <end position="115"/>
    </location>
</feature>
<comment type="function">
    <text evidence="1">This protein is located at the 30S-50S ribosomal subunit interface and may play a role in the structure and function of the aminoacyl-tRNA binding site.</text>
</comment>
<comment type="similarity">
    <text evidence="1">Belongs to the bacterial ribosomal protein bL19 family.</text>
</comment>
<evidence type="ECO:0000255" key="1">
    <source>
        <dbReference type="HAMAP-Rule" id="MF_00402"/>
    </source>
</evidence>
<evidence type="ECO:0000305" key="2"/>
<organism>
    <name type="scientific">Streptococcus pneumoniae serotype 19F (strain G54)</name>
    <dbReference type="NCBI Taxonomy" id="512566"/>
    <lineage>
        <taxon>Bacteria</taxon>
        <taxon>Bacillati</taxon>
        <taxon>Bacillota</taxon>
        <taxon>Bacilli</taxon>
        <taxon>Lactobacillales</taxon>
        <taxon>Streptococcaceae</taxon>
        <taxon>Streptococcus</taxon>
    </lineage>
</organism>
<proteinExistence type="inferred from homology"/>
<protein>
    <recommendedName>
        <fullName evidence="1">Large ribosomal subunit protein bL19</fullName>
    </recommendedName>
    <alternativeName>
        <fullName evidence="2">50S ribosomal protein L19</fullName>
    </alternativeName>
</protein>